<comment type="subcellular location">
    <subcellularLocation>
        <location evidence="2">Cell inner membrane</location>
        <topology evidence="2">Multi-pass membrane protein</topology>
    </subcellularLocation>
</comment>
<comment type="similarity">
    <text evidence="2">Belongs to the YiaN/YgiK family.</text>
</comment>
<keyword id="KW-0997">Cell inner membrane</keyword>
<keyword id="KW-1003">Cell membrane</keyword>
<keyword id="KW-0472">Membrane</keyword>
<keyword id="KW-0812">Transmembrane</keyword>
<keyword id="KW-1133">Transmembrane helix</keyword>
<keyword id="KW-0813">Transport</keyword>
<reference key="1">
    <citation type="journal article" date="1995" name="Biochem. J.">
        <title>The napEDABC gene cluster encoding the periplasmic nitrate reductase system of Thiosphaera pantotropha.</title>
        <authorList>
            <person name="Berks B.C."/>
            <person name="Richardson D.J."/>
            <person name="Reilly A."/>
            <person name="Willis A.C."/>
            <person name="Ferguson S.J."/>
        </authorList>
    </citation>
    <scope>NUCLEOTIDE SEQUENCE [GENOMIC DNA]</scope>
    <source>
        <strain>ATCC 35512 / DSM 2944 / CIP 106514 / LMD 82.5 / NBRC 102493 / NCCB 82005 / GB17</strain>
    </source>
</reference>
<proteinExistence type="inferred from homology"/>
<accession>Q56347</accession>
<feature type="chain" id="PRO_0000079820" description="Putative dicarboxylate transporter subunit">
    <location>
        <begin position="1" status="less than"/>
        <end position="206"/>
    </location>
</feature>
<feature type="transmembrane region" description="Helical" evidence="1">
    <location>
        <begin position="24"/>
        <end position="44"/>
    </location>
</feature>
<feature type="transmembrane region" description="Helical" evidence="1">
    <location>
        <begin position="55"/>
        <end position="75"/>
    </location>
</feature>
<feature type="transmembrane region" description="Helical" evidence="1">
    <location>
        <begin position="91"/>
        <end position="111"/>
    </location>
</feature>
<feature type="transmembrane region" description="Helical" evidence="1">
    <location>
        <begin position="113"/>
        <end position="133"/>
    </location>
</feature>
<feature type="transmembrane region" description="Helical" evidence="1">
    <location>
        <begin position="139"/>
        <end position="159"/>
    </location>
</feature>
<feature type="transmembrane region" description="Helical" evidence="1">
    <location>
        <begin position="178"/>
        <end position="198"/>
    </location>
</feature>
<feature type="non-terminal residue">
    <location>
        <position position="1"/>
    </location>
</feature>
<evidence type="ECO:0000255" key="1"/>
<evidence type="ECO:0000305" key="2"/>
<name>DCTM_PARPN</name>
<dbReference type="EMBL" id="Z36773">
    <property type="protein sequence ID" value="CAA85343.1"/>
    <property type="molecule type" value="Genomic_DNA"/>
</dbReference>
<dbReference type="PIR" id="S56133">
    <property type="entry name" value="S56133"/>
</dbReference>
<dbReference type="SMR" id="Q56347"/>
<dbReference type="STRING" id="82367.SAMN04244567_03479"/>
<dbReference type="eggNOG" id="COG1593">
    <property type="taxonomic scope" value="Bacteria"/>
</dbReference>
<dbReference type="GO" id="GO:0005886">
    <property type="term" value="C:plasma membrane"/>
    <property type="evidence" value="ECO:0007669"/>
    <property type="project" value="UniProtKB-SubCell"/>
</dbReference>
<dbReference type="GO" id="GO:0022857">
    <property type="term" value="F:transmembrane transporter activity"/>
    <property type="evidence" value="ECO:0007669"/>
    <property type="project" value="TreeGrafter"/>
</dbReference>
<dbReference type="InterPro" id="IPR010656">
    <property type="entry name" value="DctM"/>
</dbReference>
<dbReference type="InterPro" id="IPR004681">
    <property type="entry name" value="TRAP_DctM"/>
</dbReference>
<dbReference type="PANTHER" id="PTHR33362:SF5">
    <property type="entry name" value="C4-DICARBOXYLATE TRAP TRANSPORTER LARGE PERMEASE PROTEIN DCTM"/>
    <property type="match status" value="1"/>
</dbReference>
<dbReference type="PANTHER" id="PTHR33362">
    <property type="entry name" value="SIALIC ACID TRAP TRANSPORTER PERMEASE PROTEIN SIAT-RELATED"/>
    <property type="match status" value="1"/>
</dbReference>
<dbReference type="Pfam" id="PF06808">
    <property type="entry name" value="DctM"/>
    <property type="match status" value="1"/>
</dbReference>
<sequence length="206" mass="22082">ALLLIVLIVGGIRGGVFTPTEASVVAVFYAIVTSAFVYRGFTLADLWGAFLRSAIMSVAVLMILAAARAFAWVLIIEGVPQMADAVIAMDLSPIAFLLMVNLLLLVFGMFMDPLPGVMILVPILAPFATARIARDHFAIIVIVNLTFGLMTPPVGGLIFVVPRDPAEPSALIREQPPFFLAAMASLLILTFVPALSTWLPQISFAR</sequence>
<organism>
    <name type="scientific">Paracoccus pantotrophus</name>
    <name type="common">Thiosphaera pantotropha</name>
    <dbReference type="NCBI Taxonomy" id="82367"/>
    <lineage>
        <taxon>Bacteria</taxon>
        <taxon>Pseudomonadati</taxon>
        <taxon>Pseudomonadota</taxon>
        <taxon>Alphaproteobacteria</taxon>
        <taxon>Rhodobacterales</taxon>
        <taxon>Paracoccaceae</taxon>
        <taxon>Paracoccus</taxon>
    </lineage>
</organism>
<gene>
    <name type="primary">dctM</name>
</gene>
<protein>
    <recommendedName>
        <fullName>Putative dicarboxylate transporter subunit</fullName>
    </recommendedName>
</protein>